<comment type="function">
    <text evidence="2 7">Deubiquitinating enzyme that hydrolyzes 'Lys-6'- and 'Lys-11'-linked polyubiquitin (PubMed:35675826). Also hydrolyzes heterotypic (mixed and branched) and homotypic chains (PubMed:35675826). Important regulator of energy metabolism (PubMed:35675826). Glucose and fatty acids trigger its nuclear translocation by CBP-dependent acetylation (PubMed:35675826). In the nucleus, deubiquitinates and stabilizes the nuclear receptor PPARD regulating the expression of various genes involved in glucose and lipid metabolism and oxidative phosphorylation (PubMed:35675826). Also acts as a negative regulator of the ribosome quality control (RQC) by mediating deubiquitination of 40S ribosomal proteins RPS10/eS10 and RPS20/uS10, thereby antagonizing ZNF598-mediated 40S ubiquitination (By similarity).</text>
</comment>
<comment type="catalytic activity">
    <reaction evidence="8">
        <text>Thiol-dependent hydrolysis of ester, thioester, amide, peptide and isopeptide bonds formed by the C-terminal Gly of ubiquitin (a 76-residue protein attached to proteins as an intracellular targeting signal).</text>
        <dbReference type="EC" id="3.4.19.12"/>
    </reaction>
</comment>
<comment type="interaction">
    <interactant intactId="EBI-16170692">
        <id>B1AZ99</id>
    </interactant>
    <interactant intactId="EBI-1186266">
        <id>O08586</id>
        <label>Pten</label>
    </interactant>
    <organismsDiffer>false</organismsDiffer>
    <experiments>2</experiments>
</comment>
<comment type="subcellular location">
    <subcellularLocation>
        <location evidence="7">Cytoplasm</location>
    </subcellularLocation>
    <subcellularLocation>
        <location evidence="7">Nucleus</location>
    </subcellularLocation>
    <text evidence="7">Glucose or fatty acid promote nuclear translocation upon acetylation.</text>
</comment>
<comment type="domain">
    <text evidence="1">The UBA-like domain has no influence on ubiquitin hydrolysis.</text>
</comment>
<comment type="domain">
    <text evidence="1">Specificity is given by the S1' ubiquitin-binding site within the OTU domain composed of the Cys-, His- and Variable-loops.</text>
</comment>
<comment type="PTM">
    <text evidence="7">Glucose and fatty acids stimulate CREBBP-dependent acetylation, promoting its nuclear translocation.</text>
</comment>
<comment type="disruption phenotype">
    <text evidence="7">Knockout mice develope worse obesity, dyslipidemia and insulin resistance than wild-type mice when challenged with a high-fat diet.</text>
</comment>
<protein>
    <recommendedName>
        <fullName>OTU domain-containing protein 3</fullName>
        <ecNumber evidence="8">3.4.19.12</ecNumber>
    </recommendedName>
</protein>
<feature type="chain" id="PRO_0000424025" description="OTU domain-containing protein 3">
    <location>
        <begin position="1"/>
        <end position="396"/>
    </location>
</feature>
<feature type="domain" description="OTU" evidence="5">
    <location>
        <begin position="64"/>
        <end position="188"/>
    </location>
</feature>
<feature type="domain" description="UBA-like">
    <location>
        <begin position="229"/>
        <end position="269"/>
    </location>
</feature>
<feature type="region of interest" description="Disordered" evidence="6">
    <location>
        <begin position="1"/>
        <end position="49"/>
    </location>
</feature>
<feature type="region of interest" description="Cys-loop" evidence="1">
    <location>
        <begin position="69"/>
        <end position="75"/>
    </location>
</feature>
<feature type="region of interest" description="Variable-loop" evidence="1">
    <location>
        <begin position="126"/>
        <end position="136"/>
    </location>
</feature>
<feature type="region of interest" description="His-loop" evidence="1">
    <location>
        <begin position="176"/>
        <end position="181"/>
    </location>
</feature>
<feature type="region of interest" description="Disordered" evidence="6">
    <location>
        <begin position="275"/>
        <end position="381"/>
    </location>
</feature>
<feature type="compositionally biased region" description="Basic and acidic residues" evidence="6">
    <location>
        <begin position="16"/>
        <end position="41"/>
    </location>
</feature>
<feature type="compositionally biased region" description="Basic and acidic residues" evidence="6">
    <location>
        <begin position="280"/>
        <end position="301"/>
    </location>
</feature>
<feature type="compositionally biased region" description="Basic and acidic residues" evidence="6">
    <location>
        <begin position="312"/>
        <end position="331"/>
    </location>
</feature>
<feature type="compositionally biased region" description="Basic and acidic residues" evidence="6">
    <location>
        <begin position="343"/>
        <end position="379"/>
    </location>
</feature>
<feature type="active site" evidence="4">
    <location>
        <position position="72"/>
    </location>
</feature>
<feature type="active site" description="Nucleophile" evidence="3">
    <location>
        <position position="75"/>
    </location>
</feature>
<feature type="active site" evidence="3">
    <location>
        <position position="181"/>
    </location>
</feature>
<feature type="modified residue" description="N6-acetyllysine" evidence="2">
    <location>
        <position position="65"/>
    </location>
</feature>
<feature type="modified residue" description="N6-acetyllysine" evidence="2">
    <location>
        <position position="121"/>
    </location>
</feature>
<feature type="modified residue" description="N6-acetyllysine" evidence="2">
    <location>
        <position position="128"/>
    </location>
</feature>
<feature type="modified residue" description="N6-acetyllysine" evidence="2">
    <location>
        <position position="219"/>
    </location>
</feature>
<feature type="modified residue" description="N6-acetyllysine" evidence="2">
    <location>
        <position position="290"/>
    </location>
</feature>
<keyword id="KW-0007">Acetylation</keyword>
<keyword id="KW-0963">Cytoplasm</keyword>
<keyword id="KW-0378">Hydrolase</keyword>
<keyword id="KW-0539">Nucleus</keyword>
<keyword id="KW-0645">Protease</keyword>
<keyword id="KW-1185">Reference proteome</keyword>
<keyword id="KW-0788">Thiol protease</keyword>
<keyword id="KW-0833">Ubl conjugation pathway</keyword>
<proteinExistence type="evidence at protein level"/>
<reference key="1">
    <citation type="journal article" date="2009" name="PLoS Biol.">
        <title>Lineage-specific biology revealed by a finished genome assembly of the mouse.</title>
        <authorList>
            <person name="Church D.M."/>
            <person name="Goodstadt L."/>
            <person name="Hillier L.W."/>
            <person name="Zody M.C."/>
            <person name="Goldstein S."/>
            <person name="She X."/>
            <person name="Bult C.J."/>
            <person name="Agarwala R."/>
            <person name="Cherry J.L."/>
            <person name="DiCuccio M."/>
            <person name="Hlavina W."/>
            <person name="Kapustin Y."/>
            <person name="Meric P."/>
            <person name="Maglott D."/>
            <person name="Birtle Z."/>
            <person name="Marques A.C."/>
            <person name="Graves T."/>
            <person name="Zhou S."/>
            <person name="Teague B."/>
            <person name="Potamousis K."/>
            <person name="Churas C."/>
            <person name="Place M."/>
            <person name="Herschleb J."/>
            <person name="Runnheim R."/>
            <person name="Forrest D."/>
            <person name="Amos-Landgraf J."/>
            <person name="Schwartz D.C."/>
            <person name="Cheng Z."/>
            <person name="Lindblad-Toh K."/>
            <person name="Eichler E.E."/>
            <person name="Ponting C.P."/>
        </authorList>
    </citation>
    <scope>NUCLEOTIDE SEQUENCE [LARGE SCALE GENOMIC DNA]</scope>
    <source>
        <strain>C57BL/6J</strain>
    </source>
</reference>
<reference key="2">
    <citation type="submission" date="2005-07" db="EMBL/GenBank/DDBJ databases">
        <authorList>
            <person name="Mural R.J."/>
            <person name="Adams M.D."/>
            <person name="Myers E.W."/>
            <person name="Smith H.O."/>
            <person name="Venter J.C."/>
        </authorList>
    </citation>
    <scope>NUCLEOTIDE SEQUENCE [LARGE SCALE GENOMIC DNA]</scope>
</reference>
<reference key="3">
    <citation type="journal article" date="2022" name="Cell Metab.">
        <title>Deubiquitinase OTUD3 regulates metabolism homeostasis in response to nutritional stresses.</title>
        <authorList>
            <person name="Zhou N."/>
            <person name="Qi H."/>
            <person name="Liu J."/>
            <person name="Zhang G."/>
            <person name="Liu J."/>
            <person name="Liu N."/>
            <person name="Zhu M."/>
            <person name="Zhao X."/>
            <person name="Song C."/>
            <person name="Zhou Z."/>
            <person name="Gong J."/>
            <person name="Li R."/>
            <person name="Bai X."/>
            <person name="Jin Y."/>
            <person name="Song Y."/>
            <person name="Yin Y."/>
        </authorList>
    </citation>
    <scope>FUNCTION</scope>
    <scope>DISRUPTION PHENOTYPE</scope>
    <scope>ACETYLATION</scope>
    <scope>CATALYTIC ACTIVITY</scope>
    <scope>SUBCELLULAR LOCATION</scope>
</reference>
<sequence>MSRKQAAKSRPGSGGRRAEAERKRDERAARRALAKERRNRPDPGGSGCEEEFVSFANQLQALGLKLREVPGDGNCLFRALGDQLEGHSRNHLKHRQETVDYMIRQREDFEPFVEDDIPFEKHVASLSKPGTFAGNDAIVAFARNHQLNVVIHQLNAPLWQIRGTDKGSTRELHIAYRYGEHYDSVRRINDNSEAPAHLLTDFQMLHQDGANKKEKMKTKGVDVKDGLRDDVEDAVHKVGSATGCTDFNLIVQNLEAENYNIKSAITALLQVNQGTGNDAEENHEPGDRVKQRGPSREEAGSGRRLSGNQGRNEGRMETSEARASPAEESKAHKSQLPKVTNKQRREQQRLEKKKRQEERHRLKALENRNGSRDTGRSEADMNTQVTLVKTFAALNI</sequence>
<gene>
    <name type="primary">Otud3</name>
</gene>
<accession>B1AZ99</accession>
<evidence type="ECO:0000250" key="1"/>
<evidence type="ECO:0000250" key="2">
    <source>
        <dbReference type="UniProtKB" id="Q5T2D3"/>
    </source>
</evidence>
<evidence type="ECO:0000250" key="3">
    <source>
        <dbReference type="UniProtKB" id="Q5VVQ6"/>
    </source>
</evidence>
<evidence type="ECO:0000250" key="4">
    <source>
        <dbReference type="UniProtKB" id="Q96FW1"/>
    </source>
</evidence>
<evidence type="ECO:0000255" key="5">
    <source>
        <dbReference type="PROSITE-ProRule" id="PRU00139"/>
    </source>
</evidence>
<evidence type="ECO:0000256" key="6">
    <source>
        <dbReference type="SAM" id="MobiDB-lite"/>
    </source>
</evidence>
<evidence type="ECO:0000269" key="7">
    <source>
    </source>
</evidence>
<evidence type="ECO:0000305" key="8">
    <source>
    </source>
</evidence>
<name>OTUD3_MOUSE</name>
<organism>
    <name type="scientific">Mus musculus</name>
    <name type="common">Mouse</name>
    <dbReference type="NCBI Taxonomy" id="10090"/>
    <lineage>
        <taxon>Eukaryota</taxon>
        <taxon>Metazoa</taxon>
        <taxon>Chordata</taxon>
        <taxon>Craniata</taxon>
        <taxon>Vertebrata</taxon>
        <taxon>Euteleostomi</taxon>
        <taxon>Mammalia</taxon>
        <taxon>Eutheria</taxon>
        <taxon>Euarchontoglires</taxon>
        <taxon>Glires</taxon>
        <taxon>Rodentia</taxon>
        <taxon>Myomorpha</taxon>
        <taxon>Muroidea</taxon>
        <taxon>Muridae</taxon>
        <taxon>Murinae</taxon>
        <taxon>Mus</taxon>
        <taxon>Mus</taxon>
    </lineage>
</organism>
<dbReference type="EC" id="3.4.19.12" evidence="8"/>
<dbReference type="EMBL" id="AL929473">
    <property type="status" value="NOT_ANNOTATED_CDS"/>
    <property type="molecule type" value="Genomic_DNA"/>
</dbReference>
<dbReference type="EMBL" id="CH466615">
    <property type="protein sequence ID" value="EDL13286.1"/>
    <property type="molecule type" value="Genomic_DNA"/>
</dbReference>
<dbReference type="CCDS" id="CCDS51337.1"/>
<dbReference type="RefSeq" id="NP_082729.1">
    <property type="nucleotide sequence ID" value="NM_028453.2"/>
</dbReference>
<dbReference type="SMR" id="B1AZ99"/>
<dbReference type="BioGRID" id="215807">
    <property type="interactions" value="2"/>
</dbReference>
<dbReference type="DIP" id="DIP-61703N"/>
<dbReference type="FunCoup" id="B1AZ99">
    <property type="interactions" value="2981"/>
</dbReference>
<dbReference type="IntAct" id="B1AZ99">
    <property type="interactions" value="1"/>
</dbReference>
<dbReference type="STRING" id="10090.ENSMUSP00000095441"/>
<dbReference type="iPTMnet" id="B1AZ99"/>
<dbReference type="PhosphoSitePlus" id="B1AZ99"/>
<dbReference type="PaxDb" id="10090-ENSMUSP00000095441"/>
<dbReference type="PeptideAtlas" id="B1AZ99"/>
<dbReference type="ProteomicsDB" id="294133"/>
<dbReference type="Antibodypedia" id="29739">
    <property type="antibodies" value="77 antibodies from 17 providers"/>
</dbReference>
<dbReference type="Ensembl" id="ENSMUST00000097830.4">
    <property type="protein sequence ID" value="ENSMUSP00000095441.4"/>
    <property type="gene ID" value="ENSMUSG00000041161.9"/>
</dbReference>
<dbReference type="GeneID" id="73162"/>
<dbReference type="KEGG" id="mmu:73162"/>
<dbReference type="UCSC" id="uc008vln.2">
    <property type="organism name" value="mouse"/>
</dbReference>
<dbReference type="AGR" id="MGI:1920412"/>
<dbReference type="CTD" id="23252"/>
<dbReference type="MGI" id="MGI:1920412">
    <property type="gene designation" value="Otud3"/>
</dbReference>
<dbReference type="VEuPathDB" id="HostDB:ENSMUSG00000041161"/>
<dbReference type="eggNOG" id="ENOG502QUTD">
    <property type="taxonomic scope" value="Eukaryota"/>
</dbReference>
<dbReference type="GeneTree" id="ENSGT00390000016392"/>
<dbReference type="HOGENOM" id="CLU_056188_0_0_1"/>
<dbReference type="InParanoid" id="B1AZ99"/>
<dbReference type="OMA" id="MLCKNDS"/>
<dbReference type="OrthoDB" id="415023at2759"/>
<dbReference type="PhylomeDB" id="B1AZ99"/>
<dbReference type="TreeFam" id="TF329594"/>
<dbReference type="Reactome" id="R-MMU-5689896">
    <property type="pathway name" value="Ovarian tumor domain proteases"/>
</dbReference>
<dbReference type="Reactome" id="R-MMU-8948751">
    <property type="pathway name" value="Regulation of PTEN stability and activity"/>
</dbReference>
<dbReference type="BioGRID-ORCS" id="73162">
    <property type="hits" value="2 hits in 78 CRISPR screens"/>
</dbReference>
<dbReference type="ChiTaRS" id="Otud3">
    <property type="organism name" value="mouse"/>
</dbReference>
<dbReference type="PRO" id="PR:B1AZ99"/>
<dbReference type="Proteomes" id="UP000000589">
    <property type="component" value="Chromosome 4"/>
</dbReference>
<dbReference type="RNAct" id="B1AZ99">
    <property type="molecule type" value="protein"/>
</dbReference>
<dbReference type="Bgee" id="ENSMUSG00000041161">
    <property type="expression patterns" value="Expressed in seminiferous tubule of testis and 144 other cell types or tissues"/>
</dbReference>
<dbReference type="GO" id="GO:0005737">
    <property type="term" value="C:cytoplasm"/>
    <property type="evidence" value="ECO:0000266"/>
    <property type="project" value="MGI"/>
</dbReference>
<dbReference type="GO" id="GO:0005634">
    <property type="term" value="C:nucleus"/>
    <property type="evidence" value="ECO:0007669"/>
    <property type="project" value="UniProtKB-SubCell"/>
</dbReference>
<dbReference type="GO" id="GO:0004843">
    <property type="term" value="F:cysteine-type deubiquitinase activity"/>
    <property type="evidence" value="ECO:0000250"/>
    <property type="project" value="UniProtKB"/>
</dbReference>
<dbReference type="GO" id="GO:0031669">
    <property type="term" value="P:cellular response to nutrient levels"/>
    <property type="evidence" value="ECO:0007669"/>
    <property type="project" value="Ensembl"/>
</dbReference>
<dbReference type="GO" id="GO:0051898">
    <property type="term" value="P:negative regulation of phosphatidylinositol 3-kinase/protein kinase B signal transduction"/>
    <property type="evidence" value="ECO:0000266"/>
    <property type="project" value="MGI"/>
</dbReference>
<dbReference type="GO" id="GO:0035871">
    <property type="term" value="P:protein K11-linked deubiquitination"/>
    <property type="evidence" value="ECO:0000250"/>
    <property type="project" value="UniProtKB"/>
</dbReference>
<dbReference type="GO" id="GO:1990167">
    <property type="term" value="P:protein K27-linked deubiquitination"/>
    <property type="evidence" value="ECO:0000266"/>
    <property type="project" value="MGI"/>
</dbReference>
<dbReference type="GO" id="GO:0071108">
    <property type="term" value="P:protein K48-linked deubiquitination"/>
    <property type="evidence" value="ECO:0000266"/>
    <property type="project" value="MGI"/>
</dbReference>
<dbReference type="GO" id="GO:0044313">
    <property type="term" value="P:protein K6-linked deubiquitination"/>
    <property type="evidence" value="ECO:0000250"/>
    <property type="project" value="UniProtKB"/>
</dbReference>
<dbReference type="GO" id="GO:0050821">
    <property type="term" value="P:protein stabilization"/>
    <property type="evidence" value="ECO:0000266"/>
    <property type="project" value="MGI"/>
</dbReference>
<dbReference type="GO" id="GO:0006508">
    <property type="term" value="P:proteolysis"/>
    <property type="evidence" value="ECO:0007669"/>
    <property type="project" value="UniProtKB-KW"/>
</dbReference>
<dbReference type="CDD" id="cd22770">
    <property type="entry name" value="OTU_OTUD3"/>
    <property type="match status" value="1"/>
</dbReference>
<dbReference type="FunFam" id="3.90.70.80:FF:000005">
    <property type="entry name" value="OTU domain-containing protein 3"/>
    <property type="match status" value="1"/>
</dbReference>
<dbReference type="Gene3D" id="3.90.70.80">
    <property type="match status" value="1"/>
</dbReference>
<dbReference type="InterPro" id="IPR003323">
    <property type="entry name" value="OTU_dom"/>
</dbReference>
<dbReference type="InterPro" id="IPR038765">
    <property type="entry name" value="Papain-like_cys_pep_sf"/>
</dbReference>
<dbReference type="InterPro" id="IPR050704">
    <property type="entry name" value="Peptidase_C85-like"/>
</dbReference>
<dbReference type="PANTHER" id="PTHR12419">
    <property type="entry name" value="OTU DOMAIN CONTAINING PROTEIN"/>
    <property type="match status" value="1"/>
</dbReference>
<dbReference type="PANTHER" id="PTHR12419:SF7">
    <property type="entry name" value="OTU DOMAIN-CONTAINING PROTEIN 3"/>
    <property type="match status" value="1"/>
</dbReference>
<dbReference type="Pfam" id="PF02338">
    <property type="entry name" value="OTU"/>
    <property type="match status" value="1"/>
</dbReference>
<dbReference type="SUPFAM" id="SSF54001">
    <property type="entry name" value="Cysteine proteinases"/>
    <property type="match status" value="1"/>
</dbReference>
<dbReference type="PROSITE" id="PS50802">
    <property type="entry name" value="OTU"/>
    <property type="match status" value="1"/>
</dbReference>